<keyword id="KW-0325">Glycoprotein</keyword>
<keyword id="KW-0326">Glycosidase</keyword>
<keyword id="KW-0378">Hydrolase</keyword>
<keyword id="KW-0442">Lipid degradation</keyword>
<keyword id="KW-0443">Lipid metabolism</keyword>
<keyword id="KW-0536">Nodulation</keyword>
<keyword id="KW-1185">Reference proteome</keyword>
<keyword id="KW-0732">Signal</keyword>
<proteinExistence type="evidence at protein level"/>
<accession>A0A072VG05</accession>
<accession>O81262</accession>
<accession>Q8W0Y5</accession>
<reference key="1">
    <citation type="online journal article" date="1998" name="Plant Gene Register">
        <title>The cDNA sequence of Medicago truncatula cv. Jemalong Enod8, a gene associated with nitrogen fixing root nodule organogenesis.</title>
        <authorList>
            <person name="Liu C."/>
            <person name="Yeung A.T."/>
            <person name="Dickstein R."/>
        </authorList>
        <locator>PGR98-127</locator>
    </citation>
    <scope>NUCLEOTIDE SEQUENCE [MRNA]</scope>
    <source>
        <strain>cv. Jemalong</strain>
        <tissue>Root nodule</tissue>
    </source>
</reference>
<reference key="2">
    <citation type="journal article" date="2002" name="Plant Sci.">
        <title>Differential expression of tandemly duplicated Enod8 genes in Medicago.</title>
        <authorList>
            <person name="Dickstein R."/>
            <person name="Hu X."/>
            <person name="Yang J."/>
            <person name="Ba L."/>
            <person name="Coque L."/>
            <person name="Kim D.-J."/>
            <person name="Cook D.R."/>
            <person name="Yeung A.T."/>
        </authorList>
    </citation>
    <scope>NUCLEOTIDE SEQUENCE [GENOMIC DNA]</scope>
    <scope>INDUCTION DURING NODULATION</scope>
    <scope>TISSUE SPECIFICITY</scope>
    <source>
        <strain>cv. Jemalong A17</strain>
    </source>
</reference>
<reference key="3">
    <citation type="journal article" date="2011" name="Nature">
        <title>The Medicago genome provides insight into the evolution of rhizobial symbioses.</title>
        <authorList>
            <person name="Young N.D."/>
            <person name="Debelle F."/>
            <person name="Oldroyd G.E.D."/>
            <person name="Geurts R."/>
            <person name="Cannon S.B."/>
            <person name="Udvardi M.K."/>
            <person name="Benedito V.A."/>
            <person name="Mayer K.F.X."/>
            <person name="Gouzy J."/>
            <person name="Schoof H."/>
            <person name="Van de Peer Y."/>
            <person name="Proost S."/>
            <person name="Cook D.R."/>
            <person name="Meyers B.C."/>
            <person name="Spannagl M."/>
            <person name="Cheung F."/>
            <person name="De Mita S."/>
            <person name="Krishnakumar V."/>
            <person name="Gundlach H."/>
            <person name="Zhou S."/>
            <person name="Mudge J."/>
            <person name="Bharti A.K."/>
            <person name="Murray J.D."/>
            <person name="Naoumkina M.A."/>
            <person name="Rosen B."/>
            <person name="Silverstein K.A.T."/>
            <person name="Tang H."/>
            <person name="Rombauts S."/>
            <person name="Zhao P.X."/>
            <person name="Zhou P."/>
            <person name="Barbe V."/>
            <person name="Bardou P."/>
            <person name="Bechner M."/>
            <person name="Bellec A."/>
            <person name="Berger A."/>
            <person name="Berges H."/>
            <person name="Bidwell S."/>
            <person name="Bisseling T."/>
            <person name="Choisne N."/>
            <person name="Couloux A."/>
            <person name="Denny R."/>
            <person name="Deshpande S."/>
            <person name="Dai X."/>
            <person name="Doyle J.J."/>
            <person name="Dudez A.-M."/>
            <person name="Farmer A.D."/>
            <person name="Fouteau S."/>
            <person name="Franken C."/>
            <person name="Gibelin C."/>
            <person name="Gish J."/>
            <person name="Goldstein S."/>
            <person name="Gonzalez A.J."/>
            <person name="Green P.J."/>
            <person name="Hallab A."/>
            <person name="Hartog M."/>
            <person name="Hua A."/>
            <person name="Humphray S.J."/>
            <person name="Jeong D.-H."/>
            <person name="Jing Y."/>
            <person name="Jocker A."/>
            <person name="Kenton S.M."/>
            <person name="Kim D.-J."/>
            <person name="Klee K."/>
            <person name="Lai H."/>
            <person name="Lang C."/>
            <person name="Lin S."/>
            <person name="Macmil S.L."/>
            <person name="Magdelenat G."/>
            <person name="Matthews L."/>
            <person name="McCorrison J."/>
            <person name="Monaghan E.L."/>
            <person name="Mun J.-H."/>
            <person name="Najar F.Z."/>
            <person name="Nicholson C."/>
            <person name="Noirot C."/>
            <person name="O'Bleness M."/>
            <person name="Paule C.R."/>
            <person name="Poulain J."/>
            <person name="Prion F."/>
            <person name="Qin B."/>
            <person name="Qu C."/>
            <person name="Retzel E.F."/>
            <person name="Riddle C."/>
            <person name="Sallet E."/>
            <person name="Samain S."/>
            <person name="Samson N."/>
            <person name="Sanders I."/>
            <person name="Saurat O."/>
            <person name="Scarpelli C."/>
            <person name="Schiex T."/>
            <person name="Segurens B."/>
            <person name="Severin A.J."/>
            <person name="Sherrier D.J."/>
            <person name="Shi R."/>
            <person name="Sims S."/>
            <person name="Singer S.R."/>
            <person name="Sinharoy S."/>
            <person name="Sterck L."/>
            <person name="Viollet A."/>
            <person name="Wang B.-B."/>
            <person name="Wang K."/>
            <person name="Wang M."/>
            <person name="Wang X."/>
            <person name="Warfsmann J."/>
            <person name="Weissenbach J."/>
            <person name="White D.D."/>
            <person name="White J.D."/>
            <person name="Wiley G.B."/>
            <person name="Wincker P."/>
            <person name="Xing Y."/>
            <person name="Yang L."/>
            <person name="Yao Z."/>
            <person name="Ying F."/>
            <person name="Zhai J."/>
            <person name="Zhou L."/>
            <person name="Zuber A."/>
            <person name="Denarie J."/>
            <person name="Dixon R.A."/>
            <person name="May G.D."/>
            <person name="Schwartz D.C."/>
            <person name="Rogers J."/>
            <person name="Quetier F."/>
            <person name="Town C.D."/>
            <person name="Roe B.A."/>
        </authorList>
    </citation>
    <scope>NUCLEOTIDE SEQUENCE [LARGE SCALE GENOMIC DNA]</scope>
    <source>
        <strain>cv. Jemalong A17</strain>
    </source>
</reference>
<reference key="4">
    <citation type="journal article" date="2014" name="BMC Genomics">
        <title>An improved genome release (version Mt4.0) for the model legume Medicago truncatula.</title>
        <authorList>
            <person name="Tang H."/>
            <person name="Krishnakumar V."/>
            <person name="Bidwell S."/>
            <person name="Rosen B."/>
            <person name="Chan A."/>
            <person name="Zhou S."/>
            <person name="Gentzbittel L."/>
            <person name="Childs K.L."/>
            <person name="Yandell M."/>
            <person name="Gundlach H."/>
            <person name="Mayer K.F."/>
            <person name="Schwartz D.C."/>
            <person name="Town C.D."/>
        </authorList>
    </citation>
    <scope>GENOME REANNOTATION</scope>
    <source>
        <strain>cv. Jemalong A17</strain>
    </source>
</reference>
<reference key="5">
    <citation type="journal article" date="2018" name="Nat. Plants">
        <title>Whole-genome landscape of Medicago truncatula symbiotic genes.</title>
        <authorList>
            <person name="Pecrix Y."/>
            <person name="Staton S.E."/>
            <person name="Sallet E."/>
            <person name="Lelandais-Briere C."/>
            <person name="Moreau S."/>
            <person name="Carrere S."/>
            <person name="Blein T."/>
            <person name="Jardinaud M.F."/>
            <person name="Latrasse D."/>
            <person name="Zouine M."/>
            <person name="Zahm M."/>
            <person name="Kreplak J."/>
            <person name="Mayjonade B."/>
            <person name="Satge C."/>
            <person name="Perez M."/>
            <person name="Cauet S."/>
            <person name="Marande W."/>
            <person name="Chantry-Darmon C."/>
            <person name="Lopez-Roques C."/>
            <person name="Bouchez O."/>
            <person name="Berard A."/>
            <person name="Debelle F."/>
            <person name="Munos S."/>
            <person name="Bendahmane A."/>
            <person name="Berges H."/>
            <person name="Niebel A."/>
            <person name="Buitink J."/>
            <person name="Frugier F."/>
            <person name="Benhamed M."/>
            <person name="Crespi M."/>
            <person name="Gouzy J."/>
            <person name="Gamas P."/>
        </authorList>
    </citation>
    <scope>NUCLEOTIDE SEQUENCE [LARGE SCALE GENOMIC DNA]</scope>
    <source>
        <strain>cv. Jemalong A17</strain>
    </source>
</reference>
<reference key="6">
    <citation type="journal article" date="2004" name="Electrophoresis">
        <title>Biochemical characterization of symbiosome membrane proteins from Medicago truncatula root nodules.</title>
        <authorList>
            <person name="Catalano C.M."/>
            <person name="Lane W.S."/>
            <person name="Sherrier D.J."/>
        </authorList>
    </citation>
    <scope>IDENTIFICATION BY MASS SPECTROMETRY</scope>
    <scope>SUBCELLULAR LOCATION</scope>
    <source>
        <strain>cv. Jemalong A17</strain>
    </source>
</reference>
<reference key="7">
    <citation type="journal article" date="2004" name="Plant Physiol.">
        <title>LIN, a Medicago truncatula gene required for nodule differentiation and persistence of rhizobial infections.</title>
        <authorList>
            <person name="Kuppusamy K.T."/>
            <person name="Endre G."/>
            <person name="Prabhu R."/>
            <person name="Penmetsa R.V."/>
            <person name="Veereshlingam H."/>
            <person name="Cook D.R."/>
            <person name="Dickstein R."/>
            <person name="Vandenbosch K.A."/>
        </authorList>
    </citation>
    <scope>INDUCTION DURING NODULATION</scope>
    <source>
        <strain>cv. Jemalong A17</strain>
    </source>
</reference>
<reference key="8">
    <citation type="journal article" date="2008" name="Mol. Plant Microbe Interact.">
        <title>Transcription of ENOD8 in Medicago truncatula nodules directs ENOD8 esterase to developing and mature symbiosomes.</title>
        <authorList>
            <person name="Coque L."/>
            <person name="Neogi P."/>
            <person name="Pislariu C."/>
            <person name="Wilson K.A."/>
            <person name="Catalano C.M."/>
            <person name="Avadhani M."/>
            <person name="Sherrier D.J."/>
            <person name="Dickstein R."/>
        </authorList>
    </citation>
    <scope>FUNCTION</scope>
    <scope>SUBCELLULAR LOCATION</scope>
    <scope>DEVELOPMENTAL STAGE</scope>
    <source>
        <strain>cv. Jemalong A17</strain>
    </source>
</reference>
<feature type="signal peptide" evidence="4">
    <location>
        <begin position="1"/>
        <end position="31"/>
    </location>
</feature>
<feature type="chain" id="PRO_5014500642" description="GDSL esterase/lipase ENOD8">
    <location>
        <begin position="32"/>
        <end position="384"/>
    </location>
</feature>
<feature type="active site" description="Nucleophile" evidence="2">
    <location>
        <position position="46"/>
    </location>
</feature>
<feature type="active site" evidence="2">
    <location>
        <position position="349"/>
    </location>
</feature>
<feature type="active site" evidence="2">
    <location>
        <position position="352"/>
    </location>
</feature>
<feature type="glycosylation site" description="N-linked (GlcNAc...) asparagine" evidence="5">
    <location>
        <position position="105"/>
    </location>
</feature>
<feature type="glycosylation site" description="N-linked (GlcNAc...) asparagine" evidence="5">
    <location>
        <position position="191"/>
    </location>
</feature>
<feature type="glycosylation site" description="N-linked (GlcNAc...) asparagine" evidence="5">
    <location>
        <position position="198"/>
    </location>
</feature>
<feature type="glycosylation site" description="N-linked (GlcNAc...) asparagine" evidence="5">
    <location>
        <position position="276"/>
    </location>
</feature>
<feature type="glycosylation site" description="N-linked (GlcNAc...) asparagine" evidence="5">
    <location>
        <position position="330"/>
    </location>
</feature>
<feature type="sequence conflict" description="In Ref. 2; AAL68832." evidence="12" ref="2">
    <original>E</original>
    <variation>K</variation>
    <location>
        <position position="210"/>
    </location>
</feature>
<sequence>MKFMAKIELSRHIPLVTLIVLVLCITPPIFATKNCDFPAIFSFGASNVDTGGLAAAFRAPPSPYGETYFHRSTGRFSDGRIILDFIARSFRLPYLSPYLNSLGSNFTHGANFASGGSTINIPKSILPNGKLSPFSLQIQYIQFKEFISKTKLIRDQGGVFATLIPKEDYFSKALYIFDIGQNDLTIGFFGNKTIQQVNATVPDIVNNYIENIKNIYNLGARSFWIHGTGPKGCAPVILANFPSAIKDSYGCAKQYNEVSQYFNFKLKEALAELRSNLSSAAITYVDIYTPKYSLFTNPEKYGFELPFVACCGYGGEYNIGVGCGASININGTKIVAGSCKNPSTRIIWDGVHYTEAANEIVFSQILTGVFNDPPISLDRACYRK</sequence>
<organism>
    <name type="scientific">Medicago truncatula</name>
    <name type="common">Barrel medic</name>
    <name type="synonym">Medicago tribuloides</name>
    <dbReference type="NCBI Taxonomy" id="3880"/>
    <lineage>
        <taxon>Eukaryota</taxon>
        <taxon>Viridiplantae</taxon>
        <taxon>Streptophyta</taxon>
        <taxon>Embryophyta</taxon>
        <taxon>Tracheophyta</taxon>
        <taxon>Spermatophyta</taxon>
        <taxon>Magnoliopsida</taxon>
        <taxon>eudicotyledons</taxon>
        <taxon>Gunneridae</taxon>
        <taxon>Pentapetalae</taxon>
        <taxon>rosids</taxon>
        <taxon>fabids</taxon>
        <taxon>Fabales</taxon>
        <taxon>Fabaceae</taxon>
        <taxon>Papilionoideae</taxon>
        <taxon>50 kb inversion clade</taxon>
        <taxon>NPAAA clade</taxon>
        <taxon>Hologalegina</taxon>
        <taxon>IRL clade</taxon>
        <taxon>Trifolieae</taxon>
        <taxon>Medicago</taxon>
    </lineage>
</organism>
<protein>
    <recommendedName>
        <fullName evidence="12">GDSL esterase/lipase ENOD8</fullName>
        <ecNumber evidence="1">3.1.1.-</ecNumber>
    </recommendedName>
    <alternativeName>
        <fullName evidence="10 11">Early nodule-specific protein 8</fullName>
    </alternativeName>
</protein>
<comment type="function">
    <text evidence="3 13">Has lipase and esterase activities (By similarity). Probably involved in root nodule physiology (Probable).</text>
</comment>
<comment type="subcellular location">
    <subcellularLocation>
        <location evidence="6 8">Symbiosome</location>
    </subcellularLocation>
    <text evidence="8">Localized in symbiosome membrane or space around the bacteroids in nodule cells infected by Sinorhizobium meliloti.</text>
</comment>
<comment type="tissue specificity">
    <text evidence="9">Expressed in root nodules (at protein level).</text>
</comment>
<comment type="developmental stage">
    <text evidence="8">Expressed from the proximal end of interzone II to III to the proximal end of root nodules produced after inoculation with Sinorhizobium meliloti (at protein level).</text>
</comment>
<comment type="induction">
    <text evidence="7 9">Accumulates within 5 days in response to Sinorhizobium meliloti inoculation leading to nodulation (PubMed:15516512, Ref.2). Repressed in nodules exposed to nitrate (Ref.2).</text>
</comment>
<comment type="similarity">
    <text evidence="12">Belongs to the 'GDSL' lipolytic enzyme family.</text>
</comment>
<comment type="sequence caution" evidence="12">
    <conflict type="erroneous initiation">
        <sequence resource="EMBL-CDS" id="AAC26810"/>
    </conflict>
    <text>Truncated N-terminus.</text>
</comment>
<comment type="sequence caution" evidence="12">
    <conflict type="erroneous initiation">
        <sequence resource="EMBL-CDS" id="AAL68832"/>
    </conflict>
    <text>Truncated N-terminus.</text>
</comment>
<dbReference type="EC" id="3.1.1.-" evidence="1"/>
<dbReference type="EMBL" id="AF064775">
    <property type="protein sequence ID" value="AAC26810.1"/>
    <property type="status" value="ALT_INIT"/>
    <property type="molecule type" value="mRNA"/>
</dbReference>
<dbReference type="EMBL" id="AF463407">
    <property type="protein sequence ID" value="AAL68832.1"/>
    <property type="status" value="ALT_INIT"/>
    <property type="molecule type" value="Genomic_DNA"/>
</dbReference>
<dbReference type="EMBL" id="CM001217">
    <property type="protein sequence ID" value="KEH40536.1"/>
    <property type="molecule type" value="Genomic_DNA"/>
</dbReference>
<dbReference type="EMBL" id="PSQE01000001">
    <property type="protein sequence ID" value="RHN77930.1"/>
    <property type="molecule type" value="Genomic_DNA"/>
</dbReference>
<dbReference type="PIR" id="T52338">
    <property type="entry name" value="T52338"/>
</dbReference>
<dbReference type="RefSeq" id="XP_013466495.1">
    <property type="nucleotide sequence ID" value="XM_013611041.1"/>
</dbReference>
<dbReference type="SMR" id="A0A072VG05"/>
<dbReference type="PaxDb" id="3880-AES59831"/>
<dbReference type="ProMEX" id="A0A072VG05"/>
<dbReference type="EnsemblPlants" id="rna1438">
    <property type="protein sequence ID" value="RHN77930.1"/>
    <property type="gene ID" value="gene1438"/>
</dbReference>
<dbReference type="GeneID" id="25482476"/>
<dbReference type="Gramene" id="rna1438">
    <property type="protein sequence ID" value="RHN77930.1"/>
    <property type="gene ID" value="gene1438"/>
</dbReference>
<dbReference type="KEGG" id="mtr:25482476"/>
<dbReference type="eggNOG" id="ENOG502QQ4G">
    <property type="taxonomic scope" value="Eukaryota"/>
</dbReference>
<dbReference type="HOGENOM" id="CLU_015101_2_0_1"/>
<dbReference type="OrthoDB" id="1600564at2759"/>
<dbReference type="Proteomes" id="UP000002051">
    <property type="component" value="Chromosome 1"/>
</dbReference>
<dbReference type="Proteomes" id="UP000265566">
    <property type="component" value="Chromosome 1"/>
</dbReference>
<dbReference type="ExpressionAtlas" id="A0A072VG05">
    <property type="expression patterns" value="differential"/>
</dbReference>
<dbReference type="GO" id="GO:0043659">
    <property type="term" value="C:symbiosome"/>
    <property type="evidence" value="ECO:0007669"/>
    <property type="project" value="UniProtKB-SubCell"/>
</dbReference>
<dbReference type="GO" id="GO:0004560">
    <property type="term" value="F:alpha-L-fucosidase activity"/>
    <property type="evidence" value="ECO:0007669"/>
    <property type="project" value="UniProtKB-EC"/>
</dbReference>
<dbReference type="GO" id="GO:0016788">
    <property type="term" value="F:hydrolase activity, acting on ester bonds"/>
    <property type="evidence" value="ECO:0007669"/>
    <property type="project" value="InterPro"/>
</dbReference>
<dbReference type="GO" id="GO:0016042">
    <property type="term" value="P:lipid catabolic process"/>
    <property type="evidence" value="ECO:0007669"/>
    <property type="project" value="UniProtKB-KW"/>
</dbReference>
<dbReference type="GO" id="GO:0009877">
    <property type="term" value="P:nodulation"/>
    <property type="evidence" value="ECO:0007669"/>
    <property type="project" value="UniProtKB-KW"/>
</dbReference>
<dbReference type="CDD" id="cd01837">
    <property type="entry name" value="SGNH_plant_lipase_like"/>
    <property type="match status" value="1"/>
</dbReference>
<dbReference type="Gene3D" id="3.40.50.1110">
    <property type="entry name" value="SGNH hydrolase"/>
    <property type="match status" value="1"/>
</dbReference>
<dbReference type="InterPro" id="IPR001087">
    <property type="entry name" value="GDSL"/>
</dbReference>
<dbReference type="InterPro" id="IPR036514">
    <property type="entry name" value="SGNH_hydro_sf"/>
</dbReference>
<dbReference type="InterPro" id="IPR035669">
    <property type="entry name" value="SGNH_plant_lipase-like"/>
</dbReference>
<dbReference type="PANTHER" id="PTHR22835:SF621">
    <property type="entry name" value="GDSL ESTERASE_LIPASE ENOD8"/>
    <property type="match status" value="1"/>
</dbReference>
<dbReference type="PANTHER" id="PTHR22835">
    <property type="entry name" value="ZINC FINGER FYVE DOMAIN CONTAINING PROTEIN"/>
    <property type="match status" value="1"/>
</dbReference>
<dbReference type="Pfam" id="PF00657">
    <property type="entry name" value="Lipase_GDSL"/>
    <property type="match status" value="1"/>
</dbReference>
<dbReference type="SUPFAM" id="SSF52266">
    <property type="entry name" value="SGNH hydrolase"/>
    <property type="match status" value="1"/>
</dbReference>
<name>ENOD8_MEDTR</name>
<gene>
    <name evidence="10 11" type="primary">ENOD8</name>
    <name evidence="14" type="synonym">Enod8.1</name>
    <name evidence="15" type="ordered locus">MTR_1g030275</name>
    <name evidence="16" type="ordered locus">MtrunA17_Chr1g0160031</name>
</gene>
<evidence type="ECO:0000250" key="1">
    <source>
        <dbReference type="UniProtKB" id="B4FZ87"/>
    </source>
</evidence>
<evidence type="ECO:0000250" key="2">
    <source>
        <dbReference type="UniProtKB" id="P0ADA1"/>
    </source>
</evidence>
<evidence type="ECO:0000250" key="3">
    <source>
        <dbReference type="UniProtKB" id="Q7Y1X1"/>
    </source>
</evidence>
<evidence type="ECO:0000255" key="4"/>
<evidence type="ECO:0000255" key="5">
    <source>
        <dbReference type="PROSITE-ProRule" id="PRU00498"/>
    </source>
</evidence>
<evidence type="ECO:0000269" key="6">
    <source>
    </source>
</evidence>
<evidence type="ECO:0000269" key="7">
    <source>
    </source>
</evidence>
<evidence type="ECO:0000269" key="8">
    <source>
    </source>
</evidence>
<evidence type="ECO:0000269" key="9">
    <source ref="2"/>
</evidence>
<evidence type="ECO:0000303" key="10">
    <source ref="1"/>
</evidence>
<evidence type="ECO:0000303" key="11">
    <source ref="2"/>
</evidence>
<evidence type="ECO:0000305" key="12"/>
<evidence type="ECO:0000305" key="13">
    <source>
    </source>
</evidence>
<evidence type="ECO:0000312" key="14">
    <source>
        <dbReference type="EMBL" id="AAL68832.1"/>
    </source>
</evidence>
<evidence type="ECO:0000312" key="15">
    <source>
        <dbReference type="EMBL" id="KEH40536.1"/>
    </source>
</evidence>
<evidence type="ECO:0000312" key="16">
    <source>
        <dbReference type="EMBL" id="RHN77930.1"/>
    </source>
</evidence>